<accession>P30243</accession>
<organism>
    <name type="scientific">Avian infectious bronchitis virus (strain UK/68/84)</name>
    <name type="common">IBV</name>
    <dbReference type="NCBI Taxonomy" id="31630"/>
    <lineage>
        <taxon>Viruses</taxon>
        <taxon>Riboviria</taxon>
        <taxon>Orthornavirae</taxon>
        <taxon>Pisuviricota</taxon>
        <taxon>Pisoniviricetes</taxon>
        <taxon>Nidovirales</taxon>
        <taxon>Cornidovirineae</taxon>
        <taxon>Coronaviridae</taxon>
        <taxon>Orthocoronavirinae</taxon>
        <taxon>Gammacoronavirus</taxon>
        <taxon>Igacovirus</taxon>
        <taxon>Avian coronavirus</taxon>
    </lineage>
</organism>
<feature type="chain" id="PRO_0000106116" description="Non-structural protein 3b">
    <location>
        <begin position="1"/>
        <end position="63"/>
    </location>
</feature>
<dbReference type="EMBL" id="X60712">
    <property type="protein sequence ID" value="CAA43123.1"/>
    <property type="molecule type" value="Genomic_RNA"/>
</dbReference>
<dbReference type="PIR" id="B36816">
    <property type="entry name" value="WMIH22"/>
</dbReference>
<dbReference type="SMR" id="P30243"/>
<dbReference type="InterPro" id="IPR005295">
    <property type="entry name" value="IBV_3B"/>
</dbReference>
<dbReference type="Pfam" id="PF03622">
    <property type="entry name" value="IBV_3B"/>
    <property type="match status" value="1"/>
</dbReference>
<reference key="1">
    <citation type="journal article" date="1991" name="Virology">
        <title>A polycistronic mRNA specified by the coronavirus infectious bronchitis virus.</title>
        <authorList>
            <person name="Liu D.X."/>
            <person name="Cavanagh D."/>
            <person name="Green P."/>
            <person name="Inglis S.C."/>
        </authorList>
    </citation>
    <scope>NUCLEOTIDE SEQUENCE [GENOMIC RNA]</scope>
</reference>
<proteinExistence type="predicted"/>
<organismHost>
    <name type="scientific">Gallus gallus</name>
    <name type="common">Chicken</name>
    <dbReference type="NCBI Taxonomy" id="9031"/>
</organismHost>
<protein>
    <recommendedName>
        <fullName>Non-structural protein 3b</fullName>
        <shortName>ns3b</shortName>
    </recommendedName>
    <alternativeName>
        <fullName>Accessory protein 3b</fullName>
    </alternativeName>
</protein>
<name>NS3B_IBVU4</name>
<gene>
    <name type="ORF">3b</name>
</gene>
<sequence>MLDFEAIIEAGEQLIQKISFDLQHISSVLNTQVFDPFEYCYYRGGSFWEIESAEEFSGDDEFT</sequence>